<proteinExistence type="inferred from homology"/>
<name>ACBP_FRIAG</name>
<sequence length="87" mass="9804">MALKEEFEEHAVKAKTLPESTSNENKLILYGLYKQSTVGPVDTGRPGMFSPRERAKWDAWKAVEGKSKEEAMGDYITKVKQLLEESA</sequence>
<dbReference type="EMBL" id="AF031541">
    <property type="protein sequence ID" value="AAB86851.1"/>
    <property type="molecule type" value="mRNA"/>
</dbReference>
<dbReference type="SMR" id="O22643"/>
<dbReference type="GO" id="GO:0000062">
    <property type="term" value="F:fatty-acyl-CoA binding"/>
    <property type="evidence" value="ECO:0007669"/>
    <property type="project" value="InterPro"/>
</dbReference>
<dbReference type="GO" id="GO:0006631">
    <property type="term" value="P:fatty acid metabolic process"/>
    <property type="evidence" value="ECO:0007669"/>
    <property type="project" value="TreeGrafter"/>
</dbReference>
<dbReference type="FunFam" id="1.20.80.10:FF:000010">
    <property type="entry name" value="Acyl-CoA-binding domain-containing protein 5"/>
    <property type="match status" value="1"/>
</dbReference>
<dbReference type="Gene3D" id="1.20.80.10">
    <property type="match status" value="1"/>
</dbReference>
<dbReference type="InterPro" id="IPR022408">
    <property type="entry name" value="Acyl-CoA-binding_prot_CS"/>
</dbReference>
<dbReference type="InterPro" id="IPR000582">
    <property type="entry name" value="Acyl-CoA-binding_protein"/>
</dbReference>
<dbReference type="InterPro" id="IPR035984">
    <property type="entry name" value="Acyl-CoA-binding_sf"/>
</dbReference>
<dbReference type="InterPro" id="IPR014352">
    <property type="entry name" value="FERM/acyl-CoA-bd_prot_sf"/>
</dbReference>
<dbReference type="PANTHER" id="PTHR23310:SF62">
    <property type="entry name" value="ACYL-COA BINDING PROTEIN 1, ISOFORM A"/>
    <property type="match status" value="1"/>
</dbReference>
<dbReference type="PANTHER" id="PTHR23310">
    <property type="entry name" value="ACYL-COA-BINDING PROTEIN, ACBP"/>
    <property type="match status" value="1"/>
</dbReference>
<dbReference type="Pfam" id="PF00887">
    <property type="entry name" value="ACBP"/>
    <property type="match status" value="1"/>
</dbReference>
<dbReference type="PRINTS" id="PR00689">
    <property type="entry name" value="ACOABINDINGP"/>
</dbReference>
<dbReference type="SUPFAM" id="SSF47027">
    <property type="entry name" value="Acyl-CoA binding protein"/>
    <property type="match status" value="1"/>
</dbReference>
<dbReference type="PROSITE" id="PS00880">
    <property type="entry name" value="ACB_1"/>
    <property type="match status" value="1"/>
</dbReference>
<dbReference type="PROSITE" id="PS51228">
    <property type="entry name" value="ACB_2"/>
    <property type="match status" value="1"/>
</dbReference>
<reference key="1">
    <citation type="submission" date="1997-10" db="EMBL/GenBank/DDBJ databases">
        <authorList>
            <person name="Prabhavalkar D.S."/>
            <person name="Baysdorfer C."/>
        </authorList>
    </citation>
    <scope>NUCLEOTIDE SEQUENCE [MRNA]</scope>
</reference>
<protein>
    <recommendedName>
        <fullName>Acyl-CoA-binding protein</fullName>
        <shortName>ACBP</shortName>
    </recommendedName>
</protein>
<comment type="function">
    <text evidence="1">Binds medium- and long-chain acyl-CoA esters with very high affinity and may function as an intracellular carrier of acyl-CoA esters.</text>
</comment>
<comment type="similarity">
    <text evidence="3">Belongs to the ACBP family.</text>
</comment>
<gene>
    <name type="primary">ACABP</name>
</gene>
<organism>
    <name type="scientific">Fritillaria agrestis</name>
    <name type="common">Stinkbells</name>
    <dbReference type="NCBI Taxonomy" id="64177"/>
    <lineage>
        <taxon>Eukaryota</taxon>
        <taxon>Viridiplantae</taxon>
        <taxon>Streptophyta</taxon>
        <taxon>Embryophyta</taxon>
        <taxon>Tracheophyta</taxon>
        <taxon>Spermatophyta</taxon>
        <taxon>Magnoliopsida</taxon>
        <taxon>Liliopsida</taxon>
        <taxon>Liliales</taxon>
        <taxon>Liliaceae</taxon>
        <taxon>Fritillaria</taxon>
    </lineage>
</organism>
<accession>O22643</accession>
<keyword id="KW-0446">Lipid-binding</keyword>
<keyword id="KW-0813">Transport</keyword>
<feature type="chain" id="PRO_0000214020" description="Acyl-CoA-binding protein">
    <location>
        <begin position="1"/>
        <end position="87"/>
    </location>
</feature>
<feature type="domain" description="ACB" evidence="2">
    <location>
        <begin position="3"/>
        <end position="87"/>
    </location>
</feature>
<feature type="binding site" evidence="1">
    <location>
        <begin position="30"/>
        <end position="34"/>
    </location>
    <ligand>
        <name>an acyl-CoA</name>
        <dbReference type="ChEBI" id="CHEBI:58342"/>
    </ligand>
</feature>
<feature type="binding site" evidence="1">
    <location>
        <position position="56"/>
    </location>
    <ligand>
        <name>an acyl-CoA</name>
        <dbReference type="ChEBI" id="CHEBI:58342"/>
    </ligand>
</feature>
<feature type="binding site" evidence="1">
    <location>
        <position position="75"/>
    </location>
    <ligand>
        <name>an acyl-CoA</name>
        <dbReference type="ChEBI" id="CHEBI:58342"/>
    </ligand>
</feature>
<evidence type="ECO:0000250" key="1"/>
<evidence type="ECO:0000255" key="2">
    <source>
        <dbReference type="PROSITE-ProRule" id="PRU00573"/>
    </source>
</evidence>
<evidence type="ECO:0000305" key="3"/>